<feature type="chain" id="PRO_0000146946" description="Aromatic-L-amino-acid decarboxylase">
    <location>
        <begin position="1" status="less than"/>
        <end position="403"/>
    </location>
</feature>
<feature type="region of interest" description="Disordered" evidence="1">
    <location>
        <begin position="250"/>
        <end position="276"/>
    </location>
</feature>
<feature type="active site" evidence="1">
    <location>
        <position position="118"/>
    </location>
</feature>
<feature type="binding site" evidence="1">
    <location>
        <position position="8"/>
    </location>
    <ligand>
        <name>substrate</name>
    </ligand>
</feature>
<feature type="binding site" evidence="1">
    <location>
        <position position="74"/>
    </location>
    <ligand>
        <name>pyridoxal 5'-phosphate</name>
        <dbReference type="ChEBI" id="CHEBI:597326"/>
    </ligand>
</feature>
<feature type="binding site" evidence="1">
    <location>
        <position position="75"/>
    </location>
    <ligand>
        <name>pyridoxal 5'-phosphate</name>
        <dbReference type="ChEBI" id="CHEBI:597326"/>
    </ligand>
</feature>
<feature type="binding site" evidence="1">
    <location>
        <position position="118"/>
    </location>
    <ligand>
        <name>substrate</name>
    </ligand>
</feature>
<feature type="binding site" evidence="1">
    <location>
        <position position="197"/>
    </location>
    <ligand>
        <name>pyridoxal 5'-phosphate</name>
        <dbReference type="ChEBI" id="CHEBI:597326"/>
    </ligand>
</feature>
<feature type="binding site" evidence="1">
    <location>
        <position position="226"/>
    </location>
    <ligand>
        <name>pyridoxal 5'-phosphate</name>
        <dbReference type="ChEBI" id="CHEBI:597326"/>
    </ligand>
</feature>
<feature type="modified residue" description="N6-(pyridoxal phosphate)lysine" evidence="1">
    <location>
        <position position="229"/>
    </location>
</feature>
<feature type="non-terminal residue">
    <location>
        <position position="1"/>
    </location>
</feature>
<comment type="function">
    <text evidence="1">Catalyzes the decarboxylation of L-3,4-dihydroxyphenylalanine (L-DOPA) to dopamine and L-5-hydroxytryptophan (5-HTP) to serotonin. Catalyzes the formation of serotonin more efficiently than dopamine. Displays no activity to tyrosine. Variation in the synthesis of bioamines may be a factor contributing to natural variation in life span.</text>
</comment>
<comment type="catalytic activity">
    <reaction evidence="1">
        <text>L-dopa + H(+) = dopamine + CO2</text>
        <dbReference type="Rhea" id="RHEA:12272"/>
        <dbReference type="ChEBI" id="CHEBI:15378"/>
        <dbReference type="ChEBI" id="CHEBI:16526"/>
        <dbReference type="ChEBI" id="CHEBI:57504"/>
        <dbReference type="ChEBI" id="CHEBI:59905"/>
        <dbReference type="EC" id="4.1.1.28"/>
    </reaction>
    <physiologicalReaction direction="left-to-right" evidence="1">
        <dbReference type="Rhea" id="RHEA:12273"/>
    </physiologicalReaction>
</comment>
<comment type="catalytic activity">
    <reaction evidence="1">
        <text>5-hydroxy-L-tryptophan + H(+) = serotonin + CO2</text>
        <dbReference type="Rhea" id="RHEA:18533"/>
        <dbReference type="ChEBI" id="CHEBI:15378"/>
        <dbReference type="ChEBI" id="CHEBI:16526"/>
        <dbReference type="ChEBI" id="CHEBI:58266"/>
        <dbReference type="ChEBI" id="CHEBI:350546"/>
        <dbReference type="EC" id="4.1.1.28"/>
    </reaction>
</comment>
<comment type="cofactor">
    <cofactor evidence="1">
        <name>pyridoxal 5'-phosphate</name>
        <dbReference type="ChEBI" id="CHEBI:597326"/>
    </cofactor>
</comment>
<comment type="subunit">
    <text evidence="1">Homodimer.</text>
</comment>
<comment type="similarity">
    <text evidence="2">Belongs to the group II decarboxylase family.</text>
</comment>
<organism>
    <name type="scientific">Drosophila lebanonensis</name>
    <name type="common">Fruit fly</name>
    <name type="synonym">Scaptodrosophila lebanonensis</name>
    <dbReference type="NCBI Taxonomy" id="7225"/>
    <lineage>
        <taxon>Eukaryota</taxon>
        <taxon>Metazoa</taxon>
        <taxon>Ecdysozoa</taxon>
        <taxon>Arthropoda</taxon>
        <taxon>Hexapoda</taxon>
        <taxon>Insecta</taxon>
        <taxon>Pterygota</taxon>
        <taxon>Neoptera</taxon>
        <taxon>Endopterygota</taxon>
        <taxon>Diptera</taxon>
        <taxon>Brachycera</taxon>
        <taxon>Muscomorpha</taxon>
        <taxon>Ephydroidea</taxon>
        <taxon>Drosophilidae</taxon>
        <taxon>Scaptodrosophila</taxon>
    </lineage>
</organism>
<dbReference type="EC" id="4.1.1.28" evidence="1"/>
<dbReference type="EMBL" id="AF091329">
    <property type="protein sequence ID" value="AAC67585.1"/>
    <property type="molecule type" value="Genomic_DNA"/>
</dbReference>
<dbReference type="SMR" id="O96571"/>
<dbReference type="Proteomes" id="UP000504634">
    <property type="component" value="Unplaced"/>
</dbReference>
<dbReference type="GO" id="GO:0005737">
    <property type="term" value="C:cytoplasm"/>
    <property type="evidence" value="ECO:0007669"/>
    <property type="project" value="TreeGrafter"/>
</dbReference>
<dbReference type="GO" id="GO:0036467">
    <property type="term" value="F:5-hydroxy-L-tryptophan decarboxylase activity"/>
    <property type="evidence" value="ECO:0007669"/>
    <property type="project" value="RHEA"/>
</dbReference>
<dbReference type="GO" id="GO:0036468">
    <property type="term" value="F:L-dopa decarboxylase activity"/>
    <property type="evidence" value="ECO:0007669"/>
    <property type="project" value="RHEA"/>
</dbReference>
<dbReference type="GO" id="GO:0030170">
    <property type="term" value="F:pyridoxal phosphate binding"/>
    <property type="evidence" value="ECO:0007669"/>
    <property type="project" value="InterPro"/>
</dbReference>
<dbReference type="GO" id="GO:0006520">
    <property type="term" value="P:amino acid metabolic process"/>
    <property type="evidence" value="ECO:0007669"/>
    <property type="project" value="InterPro"/>
</dbReference>
<dbReference type="GO" id="GO:0019752">
    <property type="term" value="P:carboxylic acid metabolic process"/>
    <property type="evidence" value="ECO:0007669"/>
    <property type="project" value="InterPro"/>
</dbReference>
<dbReference type="GO" id="GO:0042423">
    <property type="term" value="P:catecholamine biosynthetic process"/>
    <property type="evidence" value="ECO:0007669"/>
    <property type="project" value="UniProtKB-KW"/>
</dbReference>
<dbReference type="GO" id="GO:0042427">
    <property type="term" value="P:serotonin biosynthetic process"/>
    <property type="evidence" value="ECO:0007669"/>
    <property type="project" value="TreeGrafter"/>
</dbReference>
<dbReference type="CDD" id="cd06450">
    <property type="entry name" value="DOPA_deC_like"/>
    <property type="match status" value="1"/>
</dbReference>
<dbReference type="FunFam" id="3.40.640.10:FF:000025">
    <property type="entry name" value="Histidine decarboxylase"/>
    <property type="match status" value="1"/>
</dbReference>
<dbReference type="Gene3D" id="3.90.1150.10">
    <property type="entry name" value="Aspartate Aminotransferase, domain 1"/>
    <property type="match status" value="1"/>
</dbReference>
<dbReference type="Gene3D" id="3.40.640.10">
    <property type="entry name" value="Type I PLP-dependent aspartate aminotransferase-like (Major domain)"/>
    <property type="match status" value="1"/>
</dbReference>
<dbReference type="InterPro" id="IPR010977">
    <property type="entry name" value="Aromatic_deC"/>
</dbReference>
<dbReference type="InterPro" id="IPR002129">
    <property type="entry name" value="PyrdxlP-dep_de-COase"/>
</dbReference>
<dbReference type="InterPro" id="IPR015424">
    <property type="entry name" value="PyrdxlP-dep_Trfase"/>
</dbReference>
<dbReference type="InterPro" id="IPR015421">
    <property type="entry name" value="PyrdxlP-dep_Trfase_major"/>
</dbReference>
<dbReference type="InterPro" id="IPR015422">
    <property type="entry name" value="PyrdxlP-dep_Trfase_small"/>
</dbReference>
<dbReference type="InterPro" id="IPR021115">
    <property type="entry name" value="Pyridoxal-P_BS"/>
</dbReference>
<dbReference type="PANTHER" id="PTHR11999:SF167">
    <property type="entry name" value="AROMATIC-L-AMINO-ACID DECARBOXYLASE"/>
    <property type="match status" value="1"/>
</dbReference>
<dbReference type="PANTHER" id="PTHR11999">
    <property type="entry name" value="GROUP II PYRIDOXAL-5-PHOSPHATE DECARBOXYLASE"/>
    <property type="match status" value="1"/>
</dbReference>
<dbReference type="Pfam" id="PF00282">
    <property type="entry name" value="Pyridoxal_deC"/>
    <property type="match status" value="1"/>
</dbReference>
<dbReference type="PRINTS" id="PR00800">
    <property type="entry name" value="YHDCRBOXLASE"/>
</dbReference>
<dbReference type="SUPFAM" id="SSF53383">
    <property type="entry name" value="PLP-dependent transferases"/>
    <property type="match status" value="1"/>
</dbReference>
<dbReference type="PROSITE" id="PS00392">
    <property type="entry name" value="DDC_GAD_HDC_YDC"/>
    <property type="match status" value="1"/>
</dbReference>
<keyword id="KW-0127">Catecholamine biosynthesis</keyword>
<keyword id="KW-0210">Decarboxylase</keyword>
<keyword id="KW-0456">Lyase</keyword>
<keyword id="KW-0663">Pyridoxal phosphate</keyword>
<keyword id="KW-1185">Reference proteome</keyword>
<accession>O96571</accession>
<sequence length="403" mass="45134">KFHAYFPTANSYPAIVADMLSGAIACIGFTWIASPACTELEVAMLDWLGKMLELPAEFLACSGGKGGGVIQGTASEATLVALLGAKAKKMKEVRETHPDWDDHTIISKLVGYSSAQAHSSVERAGLLGGVKLRSVPADEQNRLRGEALEKAIEQDLADGLIPFYAVVTLGTTNSCAFDRLDECGPVANKHNVWVHVDAAYAGSAFICPEYRHLMKGIETADSFNFNPHKWMLVNFDCSAMWLKDPSWVVNAFNVDPLYLKHDMQGSAPDYRHWQIPIGRRFRALKLWFVLRLYGVENLQAHIRRHCTYAQQFAELCVQDSRFELAAEVNMGLVCFRLKGSNERNEALLKRINGRGKIHLVPAKIRDVYFLRMAVCSRFTRPEDMEYSWQEVSAAADEEEQQQK</sequence>
<reference key="1">
    <citation type="journal article" date="1999" name="Gene">
        <title>A compact gene cluster in Drosophila: the unrelated Cs gene is compressed between duplicated amd and Ddc.</title>
        <authorList>
            <person name="Tatarenkov A."/>
            <person name="Saez A.G."/>
            <person name="Ayala F.J."/>
        </authorList>
    </citation>
    <scope>NUCLEOTIDE SEQUENCE [GENOMIC DNA]</scope>
    <source>
        <strain>Beirut</strain>
    </source>
</reference>
<evidence type="ECO:0000250" key="1">
    <source>
        <dbReference type="UniProtKB" id="P05031"/>
    </source>
</evidence>
<evidence type="ECO:0000305" key="2"/>
<protein>
    <recommendedName>
        <fullName>Aromatic-L-amino-acid decarboxylase</fullName>
        <shortName>AADC</shortName>
        <ecNumber evidence="1">4.1.1.28</ecNumber>
    </recommendedName>
    <alternativeName>
        <fullName evidence="1">DOPA decarboxylase</fullName>
        <shortName>DDC</shortName>
    </alternativeName>
</protein>
<proteinExistence type="inferred from homology"/>
<gene>
    <name type="primary">Ddc</name>
</gene>
<name>DDC_DROLE</name>